<keyword id="KW-0067">ATP-binding</keyword>
<keyword id="KW-0963">Cytoplasm</keyword>
<keyword id="KW-0227">DNA damage</keyword>
<keyword id="KW-0233">DNA recombination</keyword>
<keyword id="KW-0234">DNA repair</keyword>
<keyword id="KW-0238">DNA-binding</keyword>
<keyword id="KW-0378">Hydrolase</keyword>
<keyword id="KW-0547">Nucleotide-binding</keyword>
<keyword id="KW-1185">Reference proteome</keyword>
<comment type="function">
    <text>Participates in UV-tolerance of Synechocystis PCC 6803.</text>
</comment>
<comment type="function">
    <text evidence="1">The RuvA-RuvB-RuvC complex processes Holliday junction (HJ) DNA during genetic recombination and DNA repair, while the RuvA-RuvB complex plays an important role in the rescue of blocked DNA replication forks via replication fork reversal (RFR). RuvA specifically binds to HJ cruciform DNA, conferring on it an open structure. The RuvB hexamer acts as an ATP-dependent pump, pulling dsDNA into and through the RuvAB complex. RuvB forms 2 homohexamers on either side of HJ DNA bound by 1 or 2 RuvA tetramers; 4 subunits per hexamer contact DNA at a time. Coordinated motions by a converter formed by DNA-disengaged RuvB subunits stimulates ATP hydrolysis and nucleotide exchange. Immobilization of the converter enables RuvB to convert the ATP-contained energy into a lever motion, pulling 2 nucleotides of DNA out of the RuvA tetramer per ATP hydrolyzed, thus driving DNA branch migration. The RuvB motors rotate together with the DNA substrate, which together with the progressing nucleotide cycle form the mechanistic basis for DNA recombination by continuous HJ branch migration. Branch migration allows RuvC to scan DNA until it finds its consensus sequence, where it cleaves and resolves cruciform DNA.</text>
</comment>
<comment type="catalytic activity">
    <reaction evidence="1">
        <text>ATP + H2O = ADP + phosphate + H(+)</text>
        <dbReference type="Rhea" id="RHEA:13065"/>
        <dbReference type="ChEBI" id="CHEBI:15377"/>
        <dbReference type="ChEBI" id="CHEBI:15378"/>
        <dbReference type="ChEBI" id="CHEBI:30616"/>
        <dbReference type="ChEBI" id="CHEBI:43474"/>
        <dbReference type="ChEBI" id="CHEBI:456216"/>
    </reaction>
</comment>
<comment type="subunit">
    <text evidence="1">Homohexamer. Forms an RuvA(8)-RuvB(12)-Holliday junction (HJ) complex. HJ DNA is sandwiched between 2 RuvA tetramers; dsDNA enters through RuvA and exits via RuvB. An RuvB hexamer assembles on each DNA strand where it exits the tetramer. Each RuvB hexamer is contacted by two RuvA subunits (via domain III) on 2 adjacent RuvB subunits; this complex drives branch migration. In the full resolvosome a probable DNA-RuvA(4)-RuvB(12)-RuvC(2) complex forms which resolves the HJ.</text>
</comment>
<comment type="subcellular location">
    <subcellularLocation>
        <location evidence="1">Cytoplasm</location>
    </subcellularLocation>
</comment>
<comment type="domain">
    <text evidence="1">Has 3 domains, the large (RuvB-L) and small ATPase (RuvB-S) domains and the C-terminal head (RuvB-H) domain. The head domain binds DNA, while the ATPase domains jointly bind ATP, ADP or are empty depending on the state of the subunit in the translocation cycle. During a single DNA translocation step the structure of each domain remains the same, but their relative positions change.</text>
</comment>
<comment type="similarity">
    <text evidence="1">Belongs to the RuvB family.</text>
</comment>
<sequence>MTNILSPEKSEHDQELPIRPSYLKEFVGQQQIKENLLVFIKAAKSRNEHLDHTLFYGPPGLGKTTLAKIISNEIGGNFKSTAGPAIIKAADLASILTNLEKNDVLFIDEIHRLNTLVEEVLYSAMEDFELDIIIGEGSAARPVKITLPKFTLIGATTRFGLISNPLRDRFGIPMRLNFYNTEELKQVLNRASKLLDIDLTDSGSEEIAKRSRGTPRIALRLLRRIRDFAVVDGKSRIDKEICDFGLKRLTVDSIGLDSNDYRYLKFIADNYHGGPVGIETIAAALSEQRDELEETIEPYLIKIGLVKRTPRGRVITIAAFEHLKMPIPNKSQNQLNILNENE</sequence>
<feature type="chain" id="PRO_0000165588" description="Holliday junction branch migration complex subunit RuvB">
    <location>
        <begin position="1"/>
        <end position="342"/>
    </location>
</feature>
<feature type="region of interest" description="Large ATPase domain (RuvB-L)" evidence="1">
    <location>
        <begin position="1"/>
        <end position="179"/>
    </location>
</feature>
<feature type="region of interest" description="Small ATPAse domain (RuvB-S)" evidence="1">
    <location>
        <begin position="180"/>
        <end position="250"/>
    </location>
</feature>
<feature type="region of interest" description="Head domain (RuvB-H)" evidence="1">
    <location>
        <begin position="253"/>
        <end position="342"/>
    </location>
</feature>
<feature type="binding site" evidence="1">
    <location>
        <position position="18"/>
    </location>
    <ligand>
        <name>ATP</name>
        <dbReference type="ChEBI" id="CHEBI:30616"/>
    </ligand>
</feature>
<feature type="binding site" evidence="1">
    <location>
        <position position="19"/>
    </location>
    <ligand>
        <name>ATP</name>
        <dbReference type="ChEBI" id="CHEBI:30616"/>
    </ligand>
</feature>
<feature type="binding site" evidence="1">
    <location>
        <position position="60"/>
    </location>
    <ligand>
        <name>ATP</name>
        <dbReference type="ChEBI" id="CHEBI:30616"/>
    </ligand>
</feature>
<feature type="binding site" evidence="1">
    <location>
        <position position="63"/>
    </location>
    <ligand>
        <name>ATP</name>
        <dbReference type="ChEBI" id="CHEBI:30616"/>
    </ligand>
</feature>
<feature type="binding site" evidence="1">
    <location>
        <position position="64"/>
    </location>
    <ligand>
        <name>ATP</name>
        <dbReference type="ChEBI" id="CHEBI:30616"/>
    </ligand>
</feature>
<feature type="binding site" evidence="1">
    <location>
        <position position="64"/>
    </location>
    <ligand>
        <name>Mg(2+)</name>
        <dbReference type="ChEBI" id="CHEBI:18420"/>
    </ligand>
</feature>
<feature type="binding site" evidence="1">
    <location>
        <position position="65"/>
    </location>
    <ligand>
        <name>ATP</name>
        <dbReference type="ChEBI" id="CHEBI:30616"/>
    </ligand>
</feature>
<feature type="binding site" evidence="1">
    <location>
        <begin position="126"/>
        <end position="128"/>
    </location>
    <ligand>
        <name>ATP</name>
        <dbReference type="ChEBI" id="CHEBI:30616"/>
    </ligand>
</feature>
<feature type="binding site" evidence="1">
    <location>
        <position position="169"/>
    </location>
    <ligand>
        <name>ATP</name>
        <dbReference type="ChEBI" id="CHEBI:30616"/>
    </ligand>
</feature>
<feature type="binding site" evidence="1">
    <location>
        <position position="179"/>
    </location>
    <ligand>
        <name>ATP</name>
        <dbReference type="ChEBI" id="CHEBI:30616"/>
    </ligand>
</feature>
<feature type="binding site" evidence="1">
    <location>
        <position position="216"/>
    </location>
    <ligand>
        <name>ATP</name>
        <dbReference type="ChEBI" id="CHEBI:30616"/>
    </ligand>
</feature>
<feature type="binding site" evidence="1">
    <location>
        <position position="289"/>
    </location>
    <ligand>
        <name>DNA</name>
        <dbReference type="ChEBI" id="CHEBI:16991"/>
    </ligand>
</feature>
<feature type="binding site" evidence="1">
    <location>
        <position position="308"/>
    </location>
    <ligand>
        <name>DNA</name>
        <dbReference type="ChEBI" id="CHEBI:16991"/>
    </ligand>
</feature>
<feature type="binding site" evidence="1">
    <location>
        <position position="313"/>
    </location>
    <ligand>
        <name>DNA</name>
        <dbReference type="ChEBI" id="CHEBI:16991"/>
    </ligand>
</feature>
<organism>
    <name type="scientific">Rickettsia prowazekii (strain Madrid E)</name>
    <dbReference type="NCBI Taxonomy" id="272947"/>
    <lineage>
        <taxon>Bacteria</taxon>
        <taxon>Pseudomonadati</taxon>
        <taxon>Pseudomonadota</taxon>
        <taxon>Alphaproteobacteria</taxon>
        <taxon>Rickettsiales</taxon>
        <taxon>Rickettsiaceae</taxon>
        <taxon>Rickettsieae</taxon>
        <taxon>Rickettsia</taxon>
        <taxon>typhus group</taxon>
    </lineage>
</organism>
<evidence type="ECO:0000255" key="1">
    <source>
        <dbReference type="HAMAP-Rule" id="MF_00016"/>
    </source>
</evidence>
<name>RUVB_RICPR</name>
<reference key="1">
    <citation type="journal article" date="1998" name="Nature">
        <title>The genome sequence of Rickettsia prowazekii and the origin of mitochondria.</title>
        <authorList>
            <person name="Andersson S.G.E."/>
            <person name="Zomorodipour A."/>
            <person name="Andersson J.O."/>
            <person name="Sicheritz-Ponten T."/>
            <person name="Alsmark U.C.M."/>
            <person name="Podowski R.M."/>
            <person name="Naeslund A.K."/>
            <person name="Eriksson A.-S."/>
            <person name="Winkler H.H."/>
            <person name="Kurland C.G."/>
        </authorList>
    </citation>
    <scope>NUCLEOTIDE SEQUENCE [LARGE SCALE GENOMIC DNA]</scope>
    <source>
        <strain>Madrid E</strain>
    </source>
</reference>
<protein>
    <recommendedName>
        <fullName evidence="1">Holliday junction branch migration complex subunit RuvB</fullName>
        <ecNumber evidence="1">3.6.4.-</ecNumber>
    </recommendedName>
</protein>
<accession>Q9ZDE5</accession>
<gene>
    <name evidence="1" type="primary">ruvB</name>
    <name type="ordered locus">RP386</name>
</gene>
<dbReference type="EC" id="3.6.4.-" evidence="1"/>
<dbReference type="EMBL" id="AJ235271">
    <property type="protein sequence ID" value="CAA14843.1"/>
    <property type="molecule type" value="Genomic_DNA"/>
</dbReference>
<dbReference type="PIR" id="A71696">
    <property type="entry name" value="A71696"/>
</dbReference>
<dbReference type="RefSeq" id="NP_220767.1">
    <property type="nucleotide sequence ID" value="NC_000963.1"/>
</dbReference>
<dbReference type="RefSeq" id="WP_004599441.1">
    <property type="nucleotide sequence ID" value="NC_000963.1"/>
</dbReference>
<dbReference type="SMR" id="Q9ZDE5"/>
<dbReference type="STRING" id="272947.gene:17555466"/>
<dbReference type="EnsemblBacteria" id="CAA14843">
    <property type="protein sequence ID" value="CAA14843"/>
    <property type="gene ID" value="CAA14843"/>
</dbReference>
<dbReference type="GeneID" id="57569511"/>
<dbReference type="KEGG" id="rpr:RP386"/>
<dbReference type="PATRIC" id="fig|272947.5.peg.397"/>
<dbReference type="eggNOG" id="COG2255">
    <property type="taxonomic scope" value="Bacteria"/>
</dbReference>
<dbReference type="HOGENOM" id="CLU_055599_1_0_5"/>
<dbReference type="OrthoDB" id="9804478at2"/>
<dbReference type="Proteomes" id="UP000002480">
    <property type="component" value="Chromosome"/>
</dbReference>
<dbReference type="GO" id="GO:0005737">
    <property type="term" value="C:cytoplasm"/>
    <property type="evidence" value="ECO:0007669"/>
    <property type="project" value="UniProtKB-SubCell"/>
</dbReference>
<dbReference type="GO" id="GO:0048476">
    <property type="term" value="C:Holliday junction resolvase complex"/>
    <property type="evidence" value="ECO:0007669"/>
    <property type="project" value="UniProtKB-UniRule"/>
</dbReference>
<dbReference type="GO" id="GO:0005524">
    <property type="term" value="F:ATP binding"/>
    <property type="evidence" value="ECO:0007669"/>
    <property type="project" value="UniProtKB-UniRule"/>
</dbReference>
<dbReference type="GO" id="GO:0016887">
    <property type="term" value="F:ATP hydrolysis activity"/>
    <property type="evidence" value="ECO:0007669"/>
    <property type="project" value="InterPro"/>
</dbReference>
<dbReference type="GO" id="GO:0000400">
    <property type="term" value="F:four-way junction DNA binding"/>
    <property type="evidence" value="ECO:0007669"/>
    <property type="project" value="UniProtKB-UniRule"/>
</dbReference>
<dbReference type="GO" id="GO:0009378">
    <property type="term" value="F:four-way junction helicase activity"/>
    <property type="evidence" value="ECO:0007669"/>
    <property type="project" value="InterPro"/>
</dbReference>
<dbReference type="GO" id="GO:0006310">
    <property type="term" value="P:DNA recombination"/>
    <property type="evidence" value="ECO:0007669"/>
    <property type="project" value="UniProtKB-UniRule"/>
</dbReference>
<dbReference type="GO" id="GO:0006281">
    <property type="term" value="P:DNA repair"/>
    <property type="evidence" value="ECO:0007669"/>
    <property type="project" value="UniProtKB-UniRule"/>
</dbReference>
<dbReference type="CDD" id="cd00009">
    <property type="entry name" value="AAA"/>
    <property type="match status" value="1"/>
</dbReference>
<dbReference type="Gene3D" id="1.10.8.60">
    <property type="match status" value="1"/>
</dbReference>
<dbReference type="Gene3D" id="3.40.50.300">
    <property type="entry name" value="P-loop containing nucleotide triphosphate hydrolases"/>
    <property type="match status" value="1"/>
</dbReference>
<dbReference type="Gene3D" id="1.10.10.10">
    <property type="entry name" value="Winged helix-like DNA-binding domain superfamily/Winged helix DNA-binding domain"/>
    <property type="match status" value="1"/>
</dbReference>
<dbReference type="HAMAP" id="MF_00016">
    <property type="entry name" value="DNA_HJ_migration_RuvB"/>
    <property type="match status" value="1"/>
</dbReference>
<dbReference type="InterPro" id="IPR003593">
    <property type="entry name" value="AAA+_ATPase"/>
</dbReference>
<dbReference type="InterPro" id="IPR041445">
    <property type="entry name" value="AAA_lid_4"/>
</dbReference>
<dbReference type="InterPro" id="IPR004605">
    <property type="entry name" value="DNA_helicase_Holl-junc_RuvB"/>
</dbReference>
<dbReference type="InterPro" id="IPR027417">
    <property type="entry name" value="P-loop_NTPase"/>
</dbReference>
<dbReference type="InterPro" id="IPR008824">
    <property type="entry name" value="RuvB-like_N"/>
</dbReference>
<dbReference type="InterPro" id="IPR008823">
    <property type="entry name" value="RuvB_C"/>
</dbReference>
<dbReference type="InterPro" id="IPR036388">
    <property type="entry name" value="WH-like_DNA-bd_sf"/>
</dbReference>
<dbReference type="InterPro" id="IPR036390">
    <property type="entry name" value="WH_DNA-bd_sf"/>
</dbReference>
<dbReference type="NCBIfam" id="NF000868">
    <property type="entry name" value="PRK00080.1"/>
    <property type="match status" value="1"/>
</dbReference>
<dbReference type="NCBIfam" id="TIGR00635">
    <property type="entry name" value="ruvB"/>
    <property type="match status" value="1"/>
</dbReference>
<dbReference type="PANTHER" id="PTHR42848">
    <property type="match status" value="1"/>
</dbReference>
<dbReference type="PANTHER" id="PTHR42848:SF1">
    <property type="entry name" value="HOLLIDAY JUNCTION BRANCH MIGRATION COMPLEX SUBUNIT RUVB"/>
    <property type="match status" value="1"/>
</dbReference>
<dbReference type="Pfam" id="PF17864">
    <property type="entry name" value="AAA_lid_4"/>
    <property type="match status" value="1"/>
</dbReference>
<dbReference type="Pfam" id="PF05491">
    <property type="entry name" value="RuvB_C"/>
    <property type="match status" value="1"/>
</dbReference>
<dbReference type="Pfam" id="PF05496">
    <property type="entry name" value="RuvB_N"/>
    <property type="match status" value="1"/>
</dbReference>
<dbReference type="SMART" id="SM00382">
    <property type="entry name" value="AAA"/>
    <property type="match status" value="1"/>
</dbReference>
<dbReference type="SUPFAM" id="SSF52540">
    <property type="entry name" value="P-loop containing nucleoside triphosphate hydrolases"/>
    <property type="match status" value="1"/>
</dbReference>
<dbReference type="SUPFAM" id="SSF46785">
    <property type="entry name" value="Winged helix' DNA-binding domain"/>
    <property type="match status" value="1"/>
</dbReference>
<proteinExistence type="inferred from homology"/>